<proteinExistence type="evidence at transcript level"/>
<sequence>MPPIFQRLQQATKMSRRKILLLVLGCSTLSLLIHQGAQLSWYPKLFPLSCPPLQDSPPRPKHMTVAFLKTHKTAGTTVQNILFRFAERHNLTVALPHPSCEHQFCYPRNFSAHFVHPATRPPHVLASHLRFDRAELQRLMPPGTVYVTILREPAAMFESLFSYYNQYCPAFRRVPNASLEAFLRAPEAYYRAGEHFAMFAHNTLAYDLGGDNERSPRDDDAYLAGLIRQVEEVFSLVMIAEYFDESLVLLRRLLAWDLDDVLYARLNARAASSRLAAIPAALAQAARAWNALDAGLYDHFNATFWRRVASAGRACVEREARELREARERLLRRCFGDEPVLRPAAQIRTKQLQPWQPSRKVDIMGYDLPSGRAGPATEACLKLAMPEVQYSSYLLRKQKRRGGMRLRPEPVLDNPPPRPIRALRPGH</sequence>
<organism>
    <name type="scientific">Bos taurus</name>
    <name type="common">Bovine</name>
    <dbReference type="NCBI Taxonomy" id="9913"/>
    <lineage>
        <taxon>Eukaryota</taxon>
        <taxon>Metazoa</taxon>
        <taxon>Chordata</taxon>
        <taxon>Craniata</taxon>
        <taxon>Vertebrata</taxon>
        <taxon>Euteleostomi</taxon>
        <taxon>Mammalia</taxon>
        <taxon>Eutheria</taxon>
        <taxon>Laurasiatheria</taxon>
        <taxon>Artiodactyla</taxon>
        <taxon>Ruminantia</taxon>
        <taxon>Pecora</taxon>
        <taxon>Bovidae</taxon>
        <taxon>Bovinae</taxon>
        <taxon>Bos</taxon>
    </lineage>
</organism>
<reference key="1">
    <citation type="submission" date="2006-08" db="EMBL/GenBank/DDBJ databases">
        <authorList>
            <consortium name="NIH - Mammalian Gene Collection (MGC) project"/>
        </authorList>
    </citation>
    <scope>NUCLEOTIDE SEQUENCE [LARGE SCALE MRNA]</scope>
    <source>
        <strain>Hereford</strain>
        <tissue>Fetal pons</tissue>
    </source>
</reference>
<feature type="chain" id="PRO_0000315389" description="Galactose-3-O-sulfotransferase 3">
    <location>
        <begin position="1"/>
        <end position="427"/>
    </location>
</feature>
<feature type="topological domain" description="Cytoplasmic" evidence="2">
    <location>
        <begin position="1"/>
        <end position="19"/>
    </location>
</feature>
<feature type="transmembrane region" description="Helical; Signal-anchor for type II membrane protein" evidence="2">
    <location>
        <begin position="20"/>
        <end position="40"/>
    </location>
</feature>
<feature type="topological domain" description="Lumenal" evidence="2">
    <location>
        <begin position="41"/>
        <end position="427"/>
    </location>
</feature>
<feature type="region of interest" description="Disordered" evidence="3">
    <location>
        <begin position="404"/>
        <end position="427"/>
    </location>
</feature>
<feature type="glycosylation site" description="N-linked (GlcNAc...) asparagine" evidence="2">
    <location>
        <position position="90"/>
    </location>
</feature>
<feature type="glycosylation site" description="N-linked (GlcNAc...) asparagine" evidence="2">
    <location>
        <position position="109"/>
    </location>
</feature>
<feature type="glycosylation site" description="N-linked (GlcNAc...) asparagine" evidence="2">
    <location>
        <position position="176"/>
    </location>
</feature>
<feature type="glycosylation site" description="N-linked (GlcNAc...) asparagine" evidence="2">
    <location>
        <position position="301"/>
    </location>
</feature>
<dbReference type="EC" id="2.8.2.-"/>
<dbReference type="EMBL" id="BC120166">
    <property type="protein sequence ID" value="AAI20167.1"/>
    <property type="molecule type" value="mRNA"/>
</dbReference>
<dbReference type="RefSeq" id="NP_001069308.1">
    <property type="nucleotide sequence ID" value="NM_001075840.1"/>
</dbReference>
<dbReference type="RefSeq" id="XP_005227163.1">
    <property type="nucleotide sequence ID" value="XM_005227106.4"/>
</dbReference>
<dbReference type="FunCoup" id="Q0VCH4">
    <property type="interactions" value="402"/>
</dbReference>
<dbReference type="STRING" id="9913.ENSBTAP00000003590"/>
<dbReference type="GlyCosmos" id="Q0VCH4">
    <property type="glycosylation" value="4 sites, No reported glycans"/>
</dbReference>
<dbReference type="GlyGen" id="Q0VCH4">
    <property type="glycosylation" value="4 sites"/>
</dbReference>
<dbReference type="PaxDb" id="9913-ENSBTAP00000003590"/>
<dbReference type="Ensembl" id="ENSBTAT00000003590.5">
    <property type="protein sequence ID" value="ENSBTAP00000003590.3"/>
    <property type="gene ID" value="ENSBTAG00000002772.5"/>
</dbReference>
<dbReference type="GeneID" id="523401"/>
<dbReference type="KEGG" id="bta:523401"/>
<dbReference type="CTD" id="89792"/>
<dbReference type="VEuPathDB" id="HostDB:ENSBTAG00000002772"/>
<dbReference type="VGNC" id="VGNC:29215">
    <property type="gene designation" value="GAL3ST3"/>
</dbReference>
<dbReference type="eggNOG" id="ENOG502QPNT">
    <property type="taxonomic scope" value="Eukaryota"/>
</dbReference>
<dbReference type="GeneTree" id="ENSGT00950000182923"/>
<dbReference type="HOGENOM" id="CLU_040616_1_0_1"/>
<dbReference type="InParanoid" id="Q0VCH4"/>
<dbReference type="OMA" id="EEPWRYY"/>
<dbReference type="OrthoDB" id="514299at2759"/>
<dbReference type="TreeFam" id="TF314802"/>
<dbReference type="UniPathway" id="UPA00353"/>
<dbReference type="Proteomes" id="UP000009136">
    <property type="component" value="Chromosome 29"/>
</dbReference>
<dbReference type="Bgee" id="ENSBTAG00000002772">
    <property type="expression patterns" value="Expressed in retina and 66 other cell types or tissues"/>
</dbReference>
<dbReference type="GO" id="GO:0032580">
    <property type="term" value="C:Golgi cisterna membrane"/>
    <property type="evidence" value="ECO:0007669"/>
    <property type="project" value="UniProtKB-SubCell"/>
</dbReference>
<dbReference type="GO" id="GO:0050694">
    <property type="term" value="F:galactose 3-O-sulfotransferase activity"/>
    <property type="evidence" value="ECO:0000318"/>
    <property type="project" value="GO_Central"/>
</dbReference>
<dbReference type="GO" id="GO:0001733">
    <property type="term" value="F:galactosylceramide sulfotransferase activity"/>
    <property type="evidence" value="ECO:0007669"/>
    <property type="project" value="InterPro"/>
</dbReference>
<dbReference type="GO" id="GO:0009247">
    <property type="term" value="P:glycolipid biosynthetic process"/>
    <property type="evidence" value="ECO:0007669"/>
    <property type="project" value="InterPro"/>
</dbReference>
<dbReference type="FunFam" id="3.40.50.300:FF:001285">
    <property type="entry name" value="galactose-3-O-sulfotransferase 3"/>
    <property type="match status" value="1"/>
</dbReference>
<dbReference type="Gene3D" id="3.40.50.300">
    <property type="entry name" value="P-loop containing nucleotide triphosphate hydrolases"/>
    <property type="match status" value="1"/>
</dbReference>
<dbReference type="InterPro" id="IPR009729">
    <property type="entry name" value="Gal-3-0_sulfotransfrase"/>
</dbReference>
<dbReference type="InterPro" id="IPR027417">
    <property type="entry name" value="P-loop_NTPase"/>
</dbReference>
<dbReference type="PANTHER" id="PTHR14647">
    <property type="entry name" value="GALACTOSE-3-O-SULFOTRANSFERASE"/>
    <property type="match status" value="1"/>
</dbReference>
<dbReference type="PANTHER" id="PTHR14647:SF83">
    <property type="entry name" value="GALACTOSE-3-O-SULFOTRANSFERASE 3"/>
    <property type="match status" value="1"/>
</dbReference>
<dbReference type="Pfam" id="PF06990">
    <property type="entry name" value="Gal-3-0_sulfotr"/>
    <property type="match status" value="1"/>
</dbReference>
<dbReference type="SUPFAM" id="SSF52540">
    <property type="entry name" value="P-loop containing nucleoside triphosphate hydrolases"/>
    <property type="match status" value="1"/>
</dbReference>
<name>G3ST3_BOVIN</name>
<gene>
    <name type="primary">GAL3ST3</name>
</gene>
<evidence type="ECO:0000250" key="1"/>
<evidence type="ECO:0000255" key="2"/>
<evidence type="ECO:0000256" key="3">
    <source>
        <dbReference type="SAM" id="MobiDB-lite"/>
    </source>
</evidence>
<evidence type="ECO:0000305" key="4"/>
<comment type="function">
    <text evidence="1">Transfers a sulfate to position 3 of non-reducing beta-galactosyl residues in N-glycans and core2-branched O-glycans. Has high activity towards Gal-beta-1,4-GlcNAc, Gal-beta-1,4(Fuc-alpha-1,3)GlcNAc and lower activity towards Gal-beta-1,3(Fuc-alpha-1,4)GlcNAc (By similarity).</text>
</comment>
<comment type="cofactor">
    <cofactor evidence="1">
        <name>Mg(2+)</name>
        <dbReference type="ChEBI" id="CHEBI:18420"/>
    </cofactor>
</comment>
<comment type="pathway">
    <text>Protein modification; carbohydrate sulfation.</text>
</comment>
<comment type="subcellular location">
    <subcellularLocation>
        <location evidence="1">Golgi apparatus</location>
        <location evidence="1">Golgi stack membrane</location>
        <topology evidence="1">Single-pass type II membrane protein</topology>
    </subcellularLocation>
</comment>
<comment type="similarity">
    <text evidence="4">Belongs to the galactose-3-O-sulfotransferase family.</text>
</comment>
<protein>
    <recommendedName>
        <fullName>Galactose-3-O-sulfotransferase 3</fullName>
        <shortName>Gal3ST-3</shortName>
        <ecNumber>2.8.2.-</ecNumber>
    </recommendedName>
    <alternativeName>
        <fullName>Beta-galactose-3-O-sulfotransferase 3</fullName>
    </alternativeName>
    <alternativeName>
        <fullName>Gal-beta-1, 3-GalNAc 3'-sulfotransferase 3</fullName>
    </alternativeName>
</protein>
<accession>Q0VCH4</accession>
<keyword id="KW-0325">Glycoprotein</keyword>
<keyword id="KW-0333">Golgi apparatus</keyword>
<keyword id="KW-0460">Magnesium</keyword>
<keyword id="KW-0472">Membrane</keyword>
<keyword id="KW-1185">Reference proteome</keyword>
<keyword id="KW-0735">Signal-anchor</keyword>
<keyword id="KW-0808">Transferase</keyword>
<keyword id="KW-0812">Transmembrane</keyword>
<keyword id="KW-1133">Transmembrane helix</keyword>